<keyword id="KW-0903">Direct protein sequencing</keyword>
<keyword id="KW-1015">Disulfide bond</keyword>
<keyword id="KW-0528">Neurotoxin</keyword>
<keyword id="KW-0964">Secreted</keyword>
<keyword id="KW-0800">Toxin</keyword>
<feature type="peptide" id="PRO_0000442775" description="Conotoxin Pn3a" evidence="3">
    <location>
        <begin position="1"/>
        <end position="17"/>
    </location>
</feature>
<feature type="disulfide bond" evidence="2">
    <location>
        <begin position="2"/>
        <end position="16"/>
    </location>
</feature>
<feature type="disulfide bond" evidence="2">
    <location>
        <begin position="3"/>
        <end position="12"/>
    </location>
</feature>
<feature type="disulfide bond" evidence="2">
    <location>
        <begin position="8"/>
        <end position="15"/>
    </location>
</feature>
<proteinExistence type="evidence at protein level"/>
<dbReference type="GO" id="GO:0005576">
    <property type="term" value="C:extracellular region"/>
    <property type="evidence" value="ECO:0007669"/>
    <property type="project" value="UniProtKB-SubCell"/>
</dbReference>
<dbReference type="GO" id="GO:0090729">
    <property type="term" value="F:toxin activity"/>
    <property type="evidence" value="ECO:0007669"/>
    <property type="project" value="UniProtKB-KW"/>
</dbReference>
<reference key="1">
    <citation type="journal article" date="2017" name="Biosci. Biotechnol. Biochem.">
        <title>Isolation, structural identification and biological characterization of two conopeptides from the Conus pennaceus venom.</title>
        <authorList>
            <person name="Abdel-Wahab M."/>
            <person name="Miyashita M."/>
            <person name="Ota Y."/>
            <person name="Juichi H."/>
            <person name="Okabe R."/>
            <person name="Sarhan M."/>
            <person name="Fouda M."/>
            <person name="Abdel-Rahman M."/>
            <person name="Saber S."/>
            <person name="Nakagawa Y."/>
        </authorList>
    </citation>
    <scope>PROTEIN SEQUENCE</scope>
    <scope>FUNCTION</scope>
    <scope>BIOASSAY</scope>
    <scope>MASS SPECTROMETRY</scope>
    <scope>SUBCELLULAR LOCATION</scope>
    <scope>SYNTHESIS</scope>
    <source>
        <tissue>Venom</tissue>
    </source>
</reference>
<evidence type="ECO:0000250" key="1">
    <source>
        <dbReference type="UniProtKB" id="P0C1M9"/>
    </source>
</evidence>
<evidence type="ECO:0000250" key="2">
    <source>
        <dbReference type="UniProtKB" id="P0CI24"/>
    </source>
</evidence>
<evidence type="ECO:0000269" key="3">
    <source>
    </source>
</evidence>
<evidence type="ECO:0000303" key="4">
    <source>
    </source>
</evidence>
<evidence type="ECO:0000305" key="5"/>
<evidence type="ECO:0000305" key="6">
    <source>
    </source>
</evidence>
<organism>
    <name type="scientific">Conus pennaceus</name>
    <name type="common">Feathered cone</name>
    <name type="synonym">Conus episcopus</name>
    <dbReference type="NCBI Taxonomy" id="37335"/>
    <lineage>
        <taxon>Eukaryota</taxon>
        <taxon>Metazoa</taxon>
        <taxon>Spiralia</taxon>
        <taxon>Lophotrochozoa</taxon>
        <taxon>Mollusca</taxon>
        <taxon>Gastropoda</taxon>
        <taxon>Caenogastropoda</taxon>
        <taxon>Neogastropoda</taxon>
        <taxon>Conoidea</taxon>
        <taxon>Conidae</taxon>
        <taxon>Conus</taxon>
        <taxon>Darioconus</taxon>
    </lineage>
</organism>
<name>M3A_CONPE</name>
<protein>
    <recommendedName>
        <fullName evidence="4">Conotoxin Pn3a</fullName>
    </recommendedName>
</protein>
<comment type="function">
    <text evidence="1 3">May act as a neurotoxin (By similarity). Has no activity on mollusks (tested on the freshwater snail C.retropictus) (PubMed:28831846).</text>
</comment>
<comment type="subcellular location">
    <subcellularLocation>
        <location evidence="3">Secreted</location>
    </subcellularLocation>
</comment>
<comment type="tissue specificity">
    <text evidence="6">Expressed by the venom duct.</text>
</comment>
<comment type="domain">
    <text evidence="5">The cysteine framework is III (CC-C-C-CC). Classified in the M-2 branch, since 2 residues stand between the fourth and the fifth cysteine residues.</text>
</comment>
<comment type="mass spectrometry">
    <text>Monoisotopic mass.</text>
</comment>
<comment type="similarity">
    <text evidence="5">Belongs to the conotoxin M superfamily.</text>
</comment>
<sequence>GCCHLLACRFGCSPCCW</sequence>
<accession>P0DL85</accession>